<accession>A1KSN6</accession>
<protein>
    <recommendedName>
        <fullName evidence="1">Imidazole glycerol phosphate synthase subunit HisF</fullName>
        <ecNumber evidence="1">4.3.2.10</ecNumber>
    </recommendedName>
    <alternativeName>
        <fullName evidence="1">IGP synthase cyclase subunit</fullName>
    </alternativeName>
    <alternativeName>
        <fullName evidence="1">IGP synthase subunit HisF</fullName>
    </alternativeName>
    <alternativeName>
        <fullName evidence="1">ImGP synthase subunit HisF</fullName>
        <shortName evidence="1">IGPS subunit HisF</shortName>
    </alternativeName>
</protein>
<organism>
    <name type="scientific">Neisseria meningitidis serogroup C / serotype 2a (strain ATCC 700532 / DSM 15464 / FAM18)</name>
    <dbReference type="NCBI Taxonomy" id="272831"/>
    <lineage>
        <taxon>Bacteria</taxon>
        <taxon>Pseudomonadati</taxon>
        <taxon>Pseudomonadota</taxon>
        <taxon>Betaproteobacteria</taxon>
        <taxon>Neisseriales</taxon>
        <taxon>Neisseriaceae</taxon>
        <taxon>Neisseria</taxon>
    </lineage>
</organism>
<feature type="chain" id="PRO_1000063102" description="Imidazole glycerol phosphate synthase subunit HisF">
    <location>
        <begin position="1"/>
        <end position="255"/>
    </location>
</feature>
<feature type="active site" evidence="1">
    <location>
        <position position="12"/>
    </location>
</feature>
<feature type="active site" evidence="1">
    <location>
        <position position="131"/>
    </location>
</feature>
<name>HIS6_NEIMF</name>
<proteinExistence type="inferred from homology"/>
<evidence type="ECO:0000255" key="1">
    <source>
        <dbReference type="HAMAP-Rule" id="MF_01013"/>
    </source>
</evidence>
<reference key="1">
    <citation type="journal article" date="2007" name="PLoS Genet.">
        <title>Meningococcal genetic variation mechanisms viewed through comparative analysis of serogroup C strain FAM18.</title>
        <authorList>
            <person name="Bentley S.D."/>
            <person name="Vernikos G.S."/>
            <person name="Snyder L.A.S."/>
            <person name="Churcher C."/>
            <person name="Arrowsmith C."/>
            <person name="Chillingworth T."/>
            <person name="Cronin A."/>
            <person name="Davis P.H."/>
            <person name="Holroyd N.E."/>
            <person name="Jagels K."/>
            <person name="Maddison M."/>
            <person name="Moule S."/>
            <person name="Rabbinowitsch E."/>
            <person name="Sharp S."/>
            <person name="Unwin L."/>
            <person name="Whitehead S."/>
            <person name="Quail M.A."/>
            <person name="Achtman M."/>
            <person name="Barrell B.G."/>
            <person name="Saunders N.J."/>
            <person name="Parkhill J."/>
        </authorList>
    </citation>
    <scope>NUCLEOTIDE SEQUENCE [LARGE SCALE GENOMIC DNA]</scope>
    <source>
        <strain>ATCC 700532 / DSM 15464 / FAM18</strain>
    </source>
</reference>
<sequence>MALAKRIIPCLDVKDGRVVKGVNFIGLRDAGDPVEAAKRYNGEGADELTFLDITASSDNRDTILHIIEEVAGQVFIPLTVGGGVRTVADIRRLLNAGADKVSINTAAVTRPDLIDEAAGFFGSQAIVAAVDAKAVNSENTRWEIFTHGGRNPTGLDAVEWAIEMQKRGAGEILLTGMDRDGTKQGFNLPLTRAVAEAVDIPVIASGGVGNVRHLIEGITEGKADAVLAAGIFHFGEIAIREAKRAMREAGIEVRL</sequence>
<gene>
    <name evidence="1" type="primary">hisF</name>
    <name type="ordered locus">NMC0572</name>
</gene>
<dbReference type="EC" id="4.3.2.10" evidence="1"/>
<dbReference type="EMBL" id="AM421808">
    <property type="protein sequence ID" value="CAM09866.1"/>
    <property type="molecule type" value="Genomic_DNA"/>
</dbReference>
<dbReference type="RefSeq" id="WP_002214256.1">
    <property type="nucleotide sequence ID" value="NC_008767.1"/>
</dbReference>
<dbReference type="SMR" id="A1KSN6"/>
<dbReference type="KEGG" id="nmc:NMC0572"/>
<dbReference type="HOGENOM" id="CLU_048577_4_0_4"/>
<dbReference type="UniPathway" id="UPA00031">
    <property type="reaction ID" value="UER00010"/>
</dbReference>
<dbReference type="Proteomes" id="UP000002286">
    <property type="component" value="Chromosome"/>
</dbReference>
<dbReference type="GO" id="GO:0005737">
    <property type="term" value="C:cytoplasm"/>
    <property type="evidence" value="ECO:0007669"/>
    <property type="project" value="UniProtKB-SubCell"/>
</dbReference>
<dbReference type="GO" id="GO:0000107">
    <property type="term" value="F:imidazoleglycerol-phosphate synthase activity"/>
    <property type="evidence" value="ECO:0007669"/>
    <property type="project" value="UniProtKB-UniRule"/>
</dbReference>
<dbReference type="GO" id="GO:0016829">
    <property type="term" value="F:lyase activity"/>
    <property type="evidence" value="ECO:0007669"/>
    <property type="project" value="UniProtKB-KW"/>
</dbReference>
<dbReference type="GO" id="GO:0000105">
    <property type="term" value="P:L-histidine biosynthetic process"/>
    <property type="evidence" value="ECO:0007669"/>
    <property type="project" value="UniProtKB-UniRule"/>
</dbReference>
<dbReference type="CDD" id="cd04731">
    <property type="entry name" value="HisF"/>
    <property type="match status" value="1"/>
</dbReference>
<dbReference type="FunFam" id="3.20.20.70:FF:000006">
    <property type="entry name" value="Imidazole glycerol phosphate synthase subunit HisF"/>
    <property type="match status" value="1"/>
</dbReference>
<dbReference type="Gene3D" id="3.20.20.70">
    <property type="entry name" value="Aldolase class I"/>
    <property type="match status" value="1"/>
</dbReference>
<dbReference type="HAMAP" id="MF_01013">
    <property type="entry name" value="HisF"/>
    <property type="match status" value="1"/>
</dbReference>
<dbReference type="InterPro" id="IPR013785">
    <property type="entry name" value="Aldolase_TIM"/>
</dbReference>
<dbReference type="InterPro" id="IPR006062">
    <property type="entry name" value="His_biosynth"/>
</dbReference>
<dbReference type="InterPro" id="IPR004651">
    <property type="entry name" value="HisF"/>
</dbReference>
<dbReference type="InterPro" id="IPR050064">
    <property type="entry name" value="IGPS_HisA/HisF"/>
</dbReference>
<dbReference type="InterPro" id="IPR011060">
    <property type="entry name" value="RibuloseP-bd_barrel"/>
</dbReference>
<dbReference type="NCBIfam" id="TIGR00735">
    <property type="entry name" value="hisF"/>
    <property type="match status" value="1"/>
</dbReference>
<dbReference type="PANTHER" id="PTHR21235:SF2">
    <property type="entry name" value="IMIDAZOLE GLYCEROL PHOSPHATE SYNTHASE HISHF"/>
    <property type="match status" value="1"/>
</dbReference>
<dbReference type="PANTHER" id="PTHR21235">
    <property type="entry name" value="IMIDAZOLE GLYCEROL PHOSPHATE SYNTHASE SUBUNIT HISF/H IGP SYNTHASE SUBUNIT HISF/H"/>
    <property type="match status" value="1"/>
</dbReference>
<dbReference type="Pfam" id="PF00977">
    <property type="entry name" value="His_biosynth"/>
    <property type="match status" value="1"/>
</dbReference>
<dbReference type="SUPFAM" id="SSF51366">
    <property type="entry name" value="Ribulose-phoshate binding barrel"/>
    <property type="match status" value="1"/>
</dbReference>
<keyword id="KW-0028">Amino-acid biosynthesis</keyword>
<keyword id="KW-0963">Cytoplasm</keyword>
<keyword id="KW-0368">Histidine biosynthesis</keyword>
<keyword id="KW-0456">Lyase</keyword>
<comment type="function">
    <text evidence="1">IGPS catalyzes the conversion of PRFAR and glutamine to IGP, AICAR and glutamate. The HisF subunit catalyzes the cyclization activity that produces IGP and AICAR from PRFAR using the ammonia provided by the HisH subunit.</text>
</comment>
<comment type="catalytic activity">
    <reaction evidence="1">
        <text>5-[(5-phospho-1-deoxy-D-ribulos-1-ylimino)methylamino]-1-(5-phospho-beta-D-ribosyl)imidazole-4-carboxamide + L-glutamine = D-erythro-1-(imidazol-4-yl)glycerol 3-phosphate + 5-amino-1-(5-phospho-beta-D-ribosyl)imidazole-4-carboxamide + L-glutamate + H(+)</text>
        <dbReference type="Rhea" id="RHEA:24793"/>
        <dbReference type="ChEBI" id="CHEBI:15378"/>
        <dbReference type="ChEBI" id="CHEBI:29985"/>
        <dbReference type="ChEBI" id="CHEBI:58278"/>
        <dbReference type="ChEBI" id="CHEBI:58359"/>
        <dbReference type="ChEBI" id="CHEBI:58475"/>
        <dbReference type="ChEBI" id="CHEBI:58525"/>
        <dbReference type="EC" id="4.3.2.10"/>
    </reaction>
</comment>
<comment type="pathway">
    <text evidence="1">Amino-acid biosynthesis; L-histidine biosynthesis; L-histidine from 5-phospho-alpha-D-ribose 1-diphosphate: step 5/9.</text>
</comment>
<comment type="subunit">
    <text evidence="1">Heterodimer of HisH and HisF.</text>
</comment>
<comment type="subcellular location">
    <subcellularLocation>
        <location evidence="1">Cytoplasm</location>
    </subcellularLocation>
</comment>
<comment type="similarity">
    <text evidence="1">Belongs to the HisA/HisF family.</text>
</comment>